<evidence type="ECO:0000255" key="1">
    <source>
        <dbReference type="HAMAP-Rule" id="MF_01119"/>
    </source>
</evidence>
<sequence>MRKKTYAMRYVAGQPAERIFPPEALLHVGAELEPCVPLIHGSRLKVLVWNIFKQQRAEWLSVLQNFGKDAHLVLLQEAQTTPELVRFATTHYLVADQVPAYVLPQHPSGVMTLASAHAVYCCPLREREPLLRLSKSALVTAYPLPNEQVLMVVNIHAVNFSLGIDVYSKQLGPIGEQIIHHKGPVIIAGDFNAWSRQRINALYRFAREMGLREVRFTDDHRRKAFGRPLDFIFYRGMGVAEASVLVTRASDHNPLLVEFDVHTSKSLS</sequence>
<proteinExistence type="inferred from homology"/>
<reference key="1">
    <citation type="journal article" date="2008" name="Environ. Microbiol.">
        <title>The genome of Erwinia tasmaniensis strain Et1/99, a non-pathogenic bacterium in the genus Erwinia.</title>
        <authorList>
            <person name="Kube M."/>
            <person name="Migdoll A.M."/>
            <person name="Mueller I."/>
            <person name="Kuhl H."/>
            <person name="Beck A."/>
            <person name="Reinhardt R."/>
            <person name="Geider K."/>
        </authorList>
    </citation>
    <scope>NUCLEOTIDE SEQUENCE [LARGE SCALE GENOMIC DNA]</scope>
    <source>
        <strain>DSM 17950 / CFBP 7177 / CIP 109463 / NCPPB 4357 / Et1/99</strain>
    </source>
</reference>
<protein>
    <recommendedName>
        <fullName evidence="1">UPF0294 protein ETA_26410</fullName>
    </recommendedName>
</protein>
<gene>
    <name type="ordered locus">ETA_26410</name>
</gene>
<name>Y2641_ERWT9</name>
<dbReference type="EMBL" id="CU468135">
    <property type="protein sequence ID" value="CAO97687.1"/>
    <property type="molecule type" value="Genomic_DNA"/>
</dbReference>
<dbReference type="RefSeq" id="WP_012442350.1">
    <property type="nucleotide sequence ID" value="NC_010694.1"/>
</dbReference>
<dbReference type="SMR" id="B2VIE6"/>
<dbReference type="STRING" id="465817.ETA_26410"/>
<dbReference type="KEGG" id="eta:ETA_26410"/>
<dbReference type="eggNOG" id="COG3021">
    <property type="taxonomic scope" value="Bacteria"/>
</dbReference>
<dbReference type="HOGENOM" id="CLU_083563_0_0_6"/>
<dbReference type="OrthoDB" id="9793162at2"/>
<dbReference type="Proteomes" id="UP000001726">
    <property type="component" value="Chromosome"/>
</dbReference>
<dbReference type="GO" id="GO:0005737">
    <property type="term" value="C:cytoplasm"/>
    <property type="evidence" value="ECO:0007669"/>
    <property type="project" value="UniProtKB-SubCell"/>
</dbReference>
<dbReference type="GO" id="GO:0003824">
    <property type="term" value="F:catalytic activity"/>
    <property type="evidence" value="ECO:0007669"/>
    <property type="project" value="InterPro"/>
</dbReference>
<dbReference type="Gene3D" id="3.60.10.10">
    <property type="entry name" value="Endonuclease/exonuclease/phosphatase"/>
    <property type="match status" value="1"/>
</dbReference>
<dbReference type="HAMAP" id="MF_01119">
    <property type="entry name" value="UPF0294"/>
    <property type="match status" value="1"/>
</dbReference>
<dbReference type="InterPro" id="IPR036691">
    <property type="entry name" value="Endo/exonu/phosph_ase_sf"/>
</dbReference>
<dbReference type="InterPro" id="IPR005135">
    <property type="entry name" value="Endo/exonuclease/phosphatase"/>
</dbReference>
<dbReference type="InterPro" id="IPR022958">
    <property type="entry name" value="UPF0294"/>
</dbReference>
<dbReference type="NCBIfam" id="NF003839">
    <property type="entry name" value="PRK05421.1-1"/>
    <property type="match status" value="1"/>
</dbReference>
<dbReference type="NCBIfam" id="NF003840">
    <property type="entry name" value="PRK05421.1-2"/>
    <property type="match status" value="1"/>
</dbReference>
<dbReference type="NCBIfam" id="NF003841">
    <property type="entry name" value="PRK05421.1-3"/>
    <property type="match status" value="1"/>
</dbReference>
<dbReference type="NCBIfam" id="NF003842">
    <property type="entry name" value="PRK05421.1-4"/>
    <property type="match status" value="1"/>
</dbReference>
<dbReference type="Pfam" id="PF03372">
    <property type="entry name" value="Exo_endo_phos"/>
    <property type="match status" value="1"/>
</dbReference>
<dbReference type="SUPFAM" id="SSF56219">
    <property type="entry name" value="DNase I-like"/>
    <property type="match status" value="1"/>
</dbReference>
<keyword id="KW-0963">Cytoplasm</keyword>
<keyword id="KW-1185">Reference proteome</keyword>
<comment type="subcellular location">
    <subcellularLocation>
        <location evidence="1">Cytoplasm</location>
    </subcellularLocation>
</comment>
<comment type="similarity">
    <text evidence="1">Belongs to the UPF0294 family.</text>
</comment>
<organism>
    <name type="scientific">Erwinia tasmaniensis (strain DSM 17950 / CFBP 7177 / CIP 109463 / NCPPB 4357 / Et1/99)</name>
    <dbReference type="NCBI Taxonomy" id="465817"/>
    <lineage>
        <taxon>Bacteria</taxon>
        <taxon>Pseudomonadati</taxon>
        <taxon>Pseudomonadota</taxon>
        <taxon>Gammaproteobacteria</taxon>
        <taxon>Enterobacterales</taxon>
        <taxon>Erwiniaceae</taxon>
        <taxon>Erwinia</taxon>
    </lineage>
</organism>
<feature type="chain" id="PRO_1000137244" description="UPF0294 protein ETA_26410">
    <location>
        <begin position="1"/>
        <end position="268"/>
    </location>
</feature>
<accession>B2VIE6</accession>